<name>COX7A_THUOB</name>
<organism>
    <name type="scientific">Thunnus obesus</name>
    <name type="common">Bigeye tuna</name>
    <dbReference type="NCBI Taxonomy" id="8241"/>
    <lineage>
        <taxon>Eukaryota</taxon>
        <taxon>Metazoa</taxon>
        <taxon>Chordata</taxon>
        <taxon>Craniata</taxon>
        <taxon>Vertebrata</taxon>
        <taxon>Euteleostomi</taxon>
        <taxon>Actinopterygii</taxon>
        <taxon>Neopterygii</taxon>
        <taxon>Teleostei</taxon>
        <taxon>Neoteleostei</taxon>
        <taxon>Acanthomorphata</taxon>
        <taxon>Pelagiaria</taxon>
        <taxon>Scombriformes</taxon>
        <taxon>Scombridae</taxon>
        <taxon>Thunnus</taxon>
    </lineage>
</organism>
<sequence>XNYVPEAQKLFQAHN</sequence>
<feature type="chain" id="PRO_0000221004" description="Cytochrome c oxidase subunit 7A, mitochondrial">
    <location>
        <begin position="1"/>
        <end position="15" status="greater than"/>
    </location>
</feature>
<feature type="modified residue" description="Blocked amino end (Xaa)">
    <location>
        <position position="1"/>
    </location>
</feature>
<feature type="non-terminal residue">
    <location>
        <position position="15"/>
    </location>
</feature>
<keyword id="KW-0903">Direct protein sequencing</keyword>
<keyword id="KW-0472">Membrane</keyword>
<keyword id="KW-0496">Mitochondrion</keyword>
<keyword id="KW-0999">Mitochondrion inner membrane</keyword>
<keyword id="KW-0560">Oxidoreductase</keyword>
<keyword id="KW-0812">Transmembrane</keyword>
<keyword id="KW-1133">Transmembrane helix</keyword>
<proteinExistence type="evidence at protein level"/>
<comment type="function">
    <text evidence="2">Component of the cytochrome c oxidase, the last enzyme in the mitochondrial electron transport chain which drives oxidative phosphorylation. The respiratory chain contains 3 multisubunit complexes succinate dehydrogenase (complex II, CII), ubiquinol-cytochrome c oxidoreductase (cytochrome b-c1 complex, complex III, CIII) and cytochrome c oxidase (complex IV, CIV), that cooperate to transfer electrons derived from NADH and succinate to molecular oxygen, creating an electrochemical gradient over the inner membrane that drives transmembrane transport and the ATP synthase. Cytochrome c oxidase is the component of the respiratory chain that catalyzes the reduction of oxygen to water. Electrons originating from reduced cytochrome c in the intermembrane space (IMS) are transferred via the dinuclear copper A center (CU(A)) of subunit 2 and heme A of subunit 1 to the active site in subunit 1, a binuclear center (BNC) formed by heme A3 and copper B (CU(B)). The BNC reduces molecular oxygen to 2 water molecules using 4 electrons from cytochrome c in the IMS and 4 protons from the mitochondrial matrix.</text>
</comment>
<comment type="pathway">
    <text evidence="2">Energy metabolism; oxidative phosphorylation.</text>
</comment>
<comment type="subunit">
    <text evidence="1">Component of the cytochrome c oxidase (complex IV, CIV), a multisubunit enzyme composed of 14 subunits. The complex is composed of a catalytic core of 3 subunits MT-CO1, MT-CO2 and MT-CO3, encoded in the mitochondrial DNA, and 11 supernumerary subunits COX4I, COX5A, COX5B, COX6A, COX6B, COX6C, COX7A, COX7B, COX7C, COX8 and NDUFA4, which are encoded in the nuclear genome. The complex exists as a monomer or a dimer and forms supercomplexes (SCs) in the inner mitochondrial membrane with NADH-ubiquinone oxidoreductase (complex I, CI) and ubiquinol-cytochrome c oxidoreductase (cytochrome b-c1 complex, complex III, CIII), resulting in different assemblies (supercomplex SCI(1)III(2)IV(1) and megacomplex MCI(2)III(2)IV(2)).</text>
</comment>
<comment type="subcellular location">
    <subcellularLocation>
        <location evidence="1">Mitochondrion inner membrane</location>
        <topology evidence="1">Single-pass membrane protein</topology>
    </subcellularLocation>
</comment>
<comment type="similarity">
    <text evidence="3">Belongs to the cytochrome c oxidase VIIa family.</text>
</comment>
<dbReference type="PIR" id="S77988">
    <property type="entry name" value="S77988"/>
</dbReference>
<dbReference type="UniPathway" id="UPA00705"/>
<dbReference type="GO" id="GO:0005743">
    <property type="term" value="C:mitochondrial inner membrane"/>
    <property type="evidence" value="ECO:0007669"/>
    <property type="project" value="UniProtKB-SubCell"/>
</dbReference>
<dbReference type="GO" id="GO:0016491">
    <property type="term" value="F:oxidoreductase activity"/>
    <property type="evidence" value="ECO:0007669"/>
    <property type="project" value="UniProtKB-KW"/>
</dbReference>
<dbReference type="GO" id="GO:0006119">
    <property type="term" value="P:oxidative phosphorylation"/>
    <property type="evidence" value="ECO:0007669"/>
    <property type="project" value="UniProtKB-UniPathway"/>
</dbReference>
<reference key="1">
    <citation type="journal article" date="1997" name="Eur. J. Biochem.">
        <title>The subunit structure of cytochrome-c oxidase from tuna heart and liver.</title>
        <authorList>
            <person name="Arnold S."/>
            <person name="Lee I."/>
            <person name="Kim M."/>
            <person name="Song E."/>
            <person name="Linder D."/>
            <person name="Lottspeich F."/>
            <person name="Kadenbach B."/>
        </authorList>
    </citation>
    <scope>PROTEIN SEQUENCE</scope>
    <source>
        <tissue>Heart</tissue>
        <tissue>Liver</tissue>
    </source>
</reference>
<accession>P80979</accession>
<protein>
    <recommendedName>
        <fullName>Cytochrome c oxidase subunit 7A, mitochondrial</fullName>
    </recommendedName>
    <alternativeName>
        <fullName>Cytochrome c oxidase subunit VIIa</fullName>
    </alternativeName>
</protein>
<evidence type="ECO:0000250" key="1">
    <source>
        <dbReference type="UniProtKB" id="P07470"/>
    </source>
</evidence>
<evidence type="ECO:0000250" key="2">
    <source>
        <dbReference type="UniProtKB" id="P10174"/>
    </source>
</evidence>
<evidence type="ECO:0000305" key="3"/>